<accession>B5FJJ6</accession>
<evidence type="ECO:0000255" key="1">
    <source>
        <dbReference type="HAMAP-Rule" id="MF_01371"/>
    </source>
</evidence>
<evidence type="ECO:0000305" key="2"/>
<name>RL30_SALDC</name>
<organism>
    <name type="scientific">Salmonella dublin (strain CT_02021853)</name>
    <dbReference type="NCBI Taxonomy" id="439851"/>
    <lineage>
        <taxon>Bacteria</taxon>
        <taxon>Pseudomonadati</taxon>
        <taxon>Pseudomonadota</taxon>
        <taxon>Gammaproteobacteria</taxon>
        <taxon>Enterobacterales</taxon>
        <taxon>Enterobacteriaceae</taxon>
        <taxon>Salmonella</taxon>
    </lineage>
</organism>
<proteinExistence type="inferred from homology"/>
<sequence length="59" mass="6514">MAKTIKITQTRSAIGRLPKHKATLLGLGLRRIGHTVEREDTPAVRGMVNAVSFMVKVEE</sequence>
<gene>
    <name evidence="1" type="primary">rpmD</name>
    <name type="ordered locus">SeD_A3789</name>
</gene>
<comment type="subunit">
    <text evidence="1">Part of the 50S ribosomal subunit.</text>
</comment>
<comment type="similarity">
    <text evidence="1">Belongs to the universal ribosomal protein uL30 family.</text>
</comment>
<reference key="1">
    <citation type="journal article" date="2011" name="J. Bacteriol.">
        <title>Comparative genomics of 28 Salmonella enterica isolates: evidence for CRISPR-mediated adaptive sublineage evolution.</title>
        <authorList>
            <person name="Fricke W.F."/>
            <person name="Mammel M.K."/>
            <person name="McDermott P.F."/>
            <person name="Tartera C."/>
            <person name="White D.G."/>
            <person name="Leclerc J.E."/>
            <person name="Ravel J."/>
            <person name="Cebula T.A."/>
        </authorList>
    </citation>
    <scope>NUCLEOTIDE SEQUENCE [LARGE SCALE GENOMIC DNA]</scope>
    <source>
        <strain>CT_02021853</strain>
    </source>
</reference>
<keyword id="KW-0687">Ribonucleoprotein</keyword>
<keyword id="KW-0689">Ribosomal protein</keyword>
<protein>
    <recommendedName>
        <fullName evidence="1">Large ribosomal subunit protein uL30</fullName>
    </recommendedName>
    <alternativeName>
        <fullName evidence="2">50S ribosomal protein L30</fullName>
    </alternativeName>
</protein>
<dbReference type="EMBL" id="CP001144">
    <property type="protein sequence ID" value="ACH77717.1"/>
    <property type="molecule type" value="Genomic_DNA"/>
</dbReference>
<dbReference type="RefSeq" id="WP_001140434.1">
    <property type="nucleotide sequence ID" value="NC_011205.1"/>
</dbReference>
<dbReference type="SMR" id="B5FJJ6"/>
<dbReference type="GeneID" id="97393185"/>
<dbReference type="KEGG" id="sed:SeD_A3789"/>
<dbReference type="HOGENOM" id="CLU_131047_1_4_6"/>
<dbReference type="Proteomes" id="UP000008322">
    <property type="component" value="Chromosome"/>
</dbReference>
<dbReference type="GO" id="GO:0022625">
    <property type="term" value="C:cytosolic large ribosomal subunit"/>
    <property type="evidence" value="ECO:0007669"/>
    <property type="project" value="TreeGrafter"/>
</dbReference>
<dbReference type="GO" id="GO:0003735">
    <property type="term" value="F:structural constituent of ribosome"/>
    <property type="evidence" value="ECO:0007669"/>
    <property type="project" value="InterPro"/>
</dbReference>
<dbReference type="GO" id="GO:0006412">
    <property type="term" value="P:translation"/>
    <property type="evidence" value="ECO:0007669"/>
    <property type="project" value="UniProtKB-UniRule"/>
</dbReference>
<dbReference type="CDD" id="cd01658">
    <property type="entry name" value="Ribosomal_L30"/>
    <property type="match status" value="1"/>
</dbReference>
<dbReference type="FunFam" id="3.30.1390.20:FF:000001">
    <property type="entry name" value="50S ribosomal protein L30"/>
    <property type="match status" value="1"/>
</dbReference>
<dbReference type="Gene3D" id="3.30.1390.20">
    <property type="entry name" value="Ribosomal protein L30, ferredoxin-like fold domain"/>
    <property type="match status" value="1"/>
</dbReference>
<dbReference type="HAMAP" id="MF_01371_B">
    <property type="entry name" value="Ribosomal_uL30_B"/>
    <property type="match status" value="1"/>
</dbReference>
<dbReference type="InterPro" id="IPR036919">
    <property type="entry name" value="Ribo_uL30_ferredoxin-like_sf"/>
</dbReference>
<dbReference type="InterPro" id="IPR005996">
    <property type="entry name" value="Ribosomal_uL30_bac-type"/>
</dbReference>
<dbReference type="InterPro" id="IPR018038">
    <property type="entry name" value="Ribosomal_uL30_CS"/>
</dbReference>
<dbReference type="InterPro" id="IPR016082">
    <property type="entry name" value="Ribosomal_uL30_ferredoxin-like"/>
</dbReference>
<dbReference type="NCBIfam" id="TIGR01308">
    <property type="entry name" value="rpmD_bact"/>
    <property type="match status" value="1"/>
</dbReference>
<dbReference type="PANTHER" id="PTHR15892:SF2">
    <property type="entry name" value="LARGE RIBOSOMAL SUBUNIT PROTEIN UL30M"/>
    <property type="match status" value="1"/>
</dbReference>
<dbReference type="PANTHER" id="PTHR15892">
    <property type="entry name" value="MITOCHONDRIAL RIBOSOMAL PROTEIN L30"/>
    <property type="match status" value="1"/>
</dbReference>
<dbReference type="Pfam" id="PF00327">
    <property type="entry name" value="Ribosomal_L30"/>
    <property type="match status" value="1"/>
</dbReference>
<dbReference type="PIRSF" id="PIRSF002211">
    <property type="entry name" value="Ribosomal_L30_bac-type"/>
    <property type="match status" value="1"/>
</dbReference>
<dbReference type="SUPFAM" id="SSF55129">
    <property type="entry name" value="Ribosomal protein L30p/L7e"/>
    <property type="match status" value="1"/>
</dbReference>
<dbReference type="PROSITE" id="PS00634">
    <property type="entry name" value="RIBOSOMAL_L30"/>
    <property type="match status" value="1"/>
</dbReference>
<feature type="chain" id="PRO_1000144711" description="Large ribosomal subunit protein uL30">
    <location>
        <begin position="1"/>
        <end position="59"/>
    </location>
</feature>